<reference key="1">
    <citation type="journal article" date="2004" name="J. Bacteriol.">
        <title>Reconstruction of the central carbohydrate metabolism of Thermoproteus tenax using genomic and biochemical data.</title>
        <authorList>
            <person name="Siebers B."/>
            <person name="Tjaden B."/>
            <person name="Michalke K."/>
            <person name="Doerr C."/>
            <person name="Ahmed H."/>
            <person name="Zaparty M."/>
            <person name="Gordon P."/>
            <person name="Sensen C.W."/>
            <person name="Zibat A."/>
            <person name="Klenk H.-P."/>
            <person name="Schuster S.C."/>
            <person name="Hensel R."/>
        </authorList>
    </citation>
    <scope>NUCLEOTIDE SEQUENCE [GENOMIC DNA]</scope>
    <scope>FUNCTION</scope>
</reference>
<reference key="2">
    <citation type="journal article" date="2005" name="Biochem. J.">
        <title>The semi-phosphorylative Entner-Doudoroff pathway in hyperthermophilic archaea: a re-evaluation.</title>
        <authorList>
            <person name="Ahmed H."/>
            <person name="Ettema T.J."/>
            <person name="Tjaden B."/>
            <person name="Geerling A.C."/>
            <person name="van der Oost J."/>
            <person name="Siebers B."/>
        </authorList>
    </citation>
    <scope>FUNCTION</scope>
    <scope>CATALYTIC ACTIVITY</scope>
    <scope>SUBSTRATE SPECIFICITY</scope>
</reference>
<feature type="chain" id="PRO_0000422652" description="D-gluconate dehydratase">
    <location>
        <begin position="1"/>
        <end position="497"/>
    </location>
</feature>
<feature type="active site" description="Proton donor" evidence="1">
    <location>
        <position position="305"/>
    </location>
</feature>
<feature type="active site" description="Proton acceptor" evidence="1">
    <location>
        <position position="405"/>
    </location>
</feature>
<feature type="binding site" evidence="1">
    <location>
        <position position="303"/>
    </location>
    <ligand>
        <name>Mg(2+)</name>
        <dbReference type="ChEBI" id="CHEBI:18420"/>
    </ligand>
</feature>
<feature type="binding site" evidence="1">
    <location>
        <position position="329"/>
    </location>
    <ligand>
        <name>Mg(2+)</name>
        <dbReference type="ChEBI" id="CHEBI:18420"/>
    </ligand>
</feature>
<feature type="binding site" evidence="1">
    <location>
        <position position="355"/>
    </location>
    <ligand>
        <name>Mg(2+)</name>
        <dbReference type="ChEBI" id="CHEBI:18420"/>
    </ligand>
</feature>
<feature type="site" description="Increases basicity of active site His" evidence="1">
    <location>
        <position position="378"/>
    </location>
</feature>
<feature type="site" description="Transition state stabilizer" evidence="1">
    <location>
        <position position="430"/>
    </location>
</feature>
<accession>Q704D2</accession>
<organism>
    <name type="scientific">Thermoproteus tenax</name>
    <dbReference type="NCBI Taxonomy" id="2271"/>
    <lineage>
        <taxon>Archaea</taxon>
        <taxon>Thermoproteota</taxon>
        <taxon>Thermoprotei</taxon>
        <taxon>Thermoproteales</taxon>
        <taxon>Thermoproteaceae</taxon>
        <taxon>Thermoproteus</taxon>
    </lineage>
</organism>
<comment type="function">
    <text evidence="2 3">Involved in the degradation of glucose via the Entner-Doudoroff pathway. Catalyzes the dehydration of gluconate to produce 2-keto-3-deoxygluconate (KDG). It is not able to use D-galactonate as substrate.</text>
</comment>
<comment type="catalytic activity">
    <reaction evidence="3">
        <text>D-gluconate = 2-dehydro-3-deoxy-D-gluconate + H2O</text>
        <dbReference type="Rhea" id="RHEA:21612"/>
        <dbReference type="ChEBI" id="CHEBI:15377"/>
        <dbReference type="ChEBI" id="CHEBI:18391"/>
        <dbReference type="ChEBI" id="CHEBI:57990"/>
        <dbReference type="EC" id="4.2.1.39"/>
    </reaction>
</comment>
<comment type="cofactor">
    <cofactor evidence="1">
        <name>Mg(2+)</name>
        <dbReference type="ChEBI" id="CHEBI:18420"/>
    </cofactor>
    <text evidence="1">Binds 1 Mg(2+) ion per subunit.</text>
</comment>
<comment type="pathway">
    <text>Carbohydrate acid metabolism; D-gluconate degradation.</text>
</comment>
<comment type="similarity">
    <text evidence="4">Belongs to the mandelate racemase/muconate lactonizing enzyme family. GaD subfamily.</text>
</comment>
<name>GAD_THETE</name>
<sequence length="497" mass="55119">MASAMASSALREATCTMTRLAADVAASVSSIFSCKDSAGPRPVVPATKTTSTPLDVMFFTWFAKSSGSSLPPLKVVMTGATISIDSTRGALKKLARKGIKGWLNQYMATIKEIEPIVLYEQETDARWASYSILVRVVTSDGRVSYGEAVPTLRILPVVSAVRQTARAFLGRDPHEISAAFYEWYRQDFFLSRSFESATALSAIDMALWDLKARELGAPLYELLGGKLRDRVKVYANGWYGGCRDPQCFAEKAKEVVARGYDALKFDPFGPSFNSITSEELRRAEEAVAAVRDAVGDDVDILIEHHGRFNANAAVEIAKRFEPYRPYFMEEPLHHEDIEGYRKYRSLTSARIAMGERLISAKEALQYLVEGLVDVIQPDACNIGGVTGSMKVAALAEAFSVEVSYHNAYGPVQFALEVQLSAVTPTLYRLESFYDYWPQWKRDLIGDPFRLSQSSVEVPRGPGIGVAVNERVLEKYRAEPSEIPVGEEPVWVVRGTWR</sequence>
<gene>
    <name type="primary">gad</name>
</gene>
<protein>
    <recommendedName>
        <fullName>D-gluconate dehydratase</fullName>
        <ecNumber>4.2.1.39</ecNumber>
    </recommendedName>
</protein>
<keyword id="KW-0119">Carbohydrate metabolism</keyword>
<keyword id="KW-0456">Lyase</keyword>
<keyword id="KW-0460">Magnesium</keyword>
<keyword id="KW-0479">Metal-binding</keyword>
<evidence type="ECO:0000250" key="1"/>
<evidence type="ECO:0000269" key="2">
    <source>
    </source>
</evidence>
<evidence type="ECO:0000269" key="3">
    <source>
    </source>
</evidence>
<evidence type="ECO:0000305" key="4"/>
<dbReference type="EC" id="4.2.1.39"/>
<dbReference type="EMBL" id="AJ621281">
    <property type="protein sequence ID" value="CAF18462.1"/>
    <property type="molecule type" value="Genomic_DNA"/>
</dbReference>
<dbReference type="SMR" id="Q704D2"/>
<dbReference type="UniPathway" id="UPA00792"/>
<dbReference type="GO" id="GO:0047929">
    <property type="term" value="F:gluconate dehydratase activity"/>
    <property type="evidence" value="ECO:0000314"/>
    <property type="project" value="UniProtKB"/>
</dbReference>
<dbReference type="GO" id="GO:0046872">
    <property type="term" value="F:metal ion binding"/>
    <property type="evidence" value="ECO:0007669"/>
    <property type="project" value="UniProtKB-KW"/>
</dbReference>
<dbReference type="GO" id="GO:0009063">
    <property type="term" value="P:amino acid catabolic process"/>
    <property type="evidence" value="ECO:0007669"/>
    <property type="project" value="InterPro"/>
</dbReference>
<dbReference type="GO" id="GO:0005975">
    <property type="term" value="P:carbohydrate metabolic process"/>
    <property type="evidence" value="ECO:0000314"/>
    <property type="project" value="UniProtKB"/>
</dbReference>
<dbReference type="CDD" id="cd03316">
    <property type="entry name" value="MR_like"/>
    <property type="match status" value="1"/>
</dbReference>
<dbReference type="FunFam" id="3.20.20.120:FF:000005">
    <property type="entry name" value="Putative L-rhamnonate dehydratase"/>
    <property type="match status" value="1"/>
</dbReference>
<dbReference type="Gene3D" id="3.20.20.120">
    <property type="entry name" value="Enolase-like C-terminal domain"/>
    <property type="match status" value="1"/>
</dbReference>
<dbReference type="Gene3D" id="3.30.390.10">
    <property type="entry name" value="Enolase-like, N-terminal domain"/>
    <property type="match status" value="1"/>
</dbReference>
<dbReference type="InterPro" id="IPR034593">
    <property type="entry name" value="DgoD-like"/>
</dbReference>
<dbReference type="InterPro" id="IPR036849">
    <property type="entry name" value="Enolase-like_C_sf"/>
</dbReference>
<dbReference type="InterPro" id="IPR029017">
    <property type="entry name" value="Enolase-like_N"/>
</dbReference>
<dbReference type="InterPro" id="IPR029065">
    <property type="entry name" value="Enolase_C-like"/>
</dbReference>
<dbReference type="InterPro" id="IPR034599">
    <property type="entry name" value="Gluconate_dehydratase"/>
</dbReference>
<dbReference type="InterPro" id="IPR018110">
    <property type="entry name" value="Mandel_Rmase/mucon_lact_enz_CS"/>
</dbReference>
<dbReference type="InterPro" id="IPR013342">
    <property type="entry name" value="Mandelate_racemase_C"/>
</dbReference>
<dbReference type="InterPro" id="IPR013341">
    <property type="entry name" value="Mandelate_racemase_N_dom"/>
</dbReference>
<dbReference type="PANTHER" id="PTHR48080:SF2">
    <property type="entry name" value="D-GALACTONATE DEHYDRATASE"/>
    <property type="match status" value="1"/>
</dbReference>
<dbReference type="PANTHER" id="PTHR48080">
    <property type="entry name" value="D-GALACTONATE DEHYDRATASE-RELATED"/>
    <property type="match status" value="1"/>
</dbReference>
<dbReference type="Pfam" id="PF13378">
    <property type="entry name" value="MR_MLE_C"/>
    <property type="match status" value="1"/>
</dbReference>
<dbReference type="Pfam" id="PF02746">
    <property type="entry name" value="MR_MLE_N"/>
    <property type="match status" value="1"/>
</dbReference>
<dbReference type="SFLD" id="SFLDF00008">
    <property type="entry name" value="gluconate_dehydratase"/>
    <property type="match status" value="1"/>
</dbReference>
<dbReference type="SFLD" id="SFLDG00179">
    <property type="entry name" value="mandelate_racemase"/>
    <property type="match status" value="1"/>
</dbReference>
<dbReference type="SMART" id="SM00922">
    <property type="entry name" value="MR_MLE"/>
    <property type="match status" value="1"/>
</dbReference>
<dbReference type="SUPFAM" id="SSF51604">
    <property type="entry name" value="Enolase C-terminal domain-like"/>
    <property type="match status" value="1"/>
</dbReference>
<dbReference type="SUPFAM" id="SSF54826">
    <property type="entry name" value="Enolase N-terminal domain-like"/>
    <property type="match status" value="1"/>
</dbReference>
<dbReference type="PROSITE" id="PS00908">
    <property type="entry name" value="MR_MLE_1"/>
    <property type="match status" value="1"/>
</dbReference>
<proteinExistence type="evidence at protein level"/>